<protein>
    <recommendedName>
        <fullName evidence="2">Translation initiation factor IF-2</fullName>
    </recommendedName>
</protein>
<organism>
    <name type="scientific">Staphylococcus epidermidis (strain ATCC 12228 / FDA PCI 1200)</name>
    <dbReference type="NCBI Taxonomy" id="176280"/>
    <lineage>
        <taxon>Bacteria</taxon>
        <taxon>Bacillati</taxon>
        <taxon>Bacillota</taxon>
        <taxon>Bacilli</taxon>
        <taxon>Bacillales</taxon>
        <taxon>Staphylococcaceae</taxon>
        <taxon>Staphylococcus</taxon>
    </lineage>
</organism>
<gene>
    <name evidence="2" type="primary">infB</name>
    <name type="ordered locus">SE_0945</name>
</gene>
<sequence length="720" mass="79343">MSKKRIYEYAKELNLKSKEIIDELKSMNVEVSNHMQALEEEQIKALDKKFKASQAKDTNKQNTQNNHQKSNNKQNSNDKEKQQSKNNSKPTKKKEQNNKGKQQNKNNKTNKNQKNNKNKKNNKNNKPQNEVEETKEMPSKITYQEGITVGELAEKLNVESAGIIKKLFLLGIMANINQSLDEETLELIADDYGVEIEKEVVVDEEDLSIYFDDETDDSDAIERPAVVTIMGHVDHGKTTLLDSIRNTKVTEGEAGGITQHIGAYQIENSGKKITFLDTPGHAAFTTMRARGAQVTDITILVVAADDGVMPQTIEAINHAKEAEVPTIVAVNKIDKPTANPDRVMQELTEYGLIPEDWGGDTIFVPLSALSGDGIDDLLEMIGLVAEVQELKANPNKQAVGTVIEAELDKSRGPAASLLVQNGTLNVGDAIVVGNTYGRIRAMVNDLGKRIKSAGPSTPVEITGINDVPLAGDRFVVFGDEKQARRIGEARHEASVIQQRQESKNVSLDNLFEQMKQGEMKDLNVIIKGDVQGSVEALAASLMKIDVEGVNVRIIHTAVGAINESDVTLANASNGIIIGFNVRPDAGAKRAAEAENVDMRLHRVIYNVIEEIESAMKGLLDPEFEEQVIGQAEVRQTFKVSKVGTIAGSYVTEGKITRNAGVRVIRDGIVLFEGELDTLKRFKDDAKEVAQGYECGITIEKYNDLKEGDIIEAFEMVEIQR</sequence>
<comment type="function">
    <text evidence="2">One of the essential components for the initiation of protein synthesis. Protects formylmethionyl-tRNA from spontaneous hydrolysis and promotes its binding to the 30S ribosomal subunits. Also involved in the hydrolysis of GTP during the formation of the 70S ribosomal complex.</text>
</comment>
<comment type="subcellular location">
    <subcellularLocation>
        <location evidence="2">Cytoplasm</location>
    </subcellularLocation>
</comment>
<comment type="similarity">
    <text evidence="2">Belongs to the TRAFAC class translation factor GTPase superfamily. Classic translation factor GTPase family. IF-2 subfamily.</text>
</comment>
<name>IF2_STAES</name>
<keyword id="KW-0963">Cytoplasm</keyword>
<keyword id="KW-0342">GTP-binding</keyword>
<keyword id="KW-0396">Initiation factor</keyword>
<keyword id="KW-0547">Nucleotide-binding</keyword>
<keyword id="KW-0648">Protein biosynthesis</keyword>
<reference key="1">
    <citation type="journal article" date="2003" name="Mol. Microbiol.">
        <title>Genome-based analysis of virulence genes in a non-biofilm-forming Staphylococcus epidermidis strain (ATCC 12228).</title>
        <authorList>
            <person name="Zhang Y.-Q."/>
            <person name="Ren S.-X."/>
            <person name="Li H.-L."/>
            <person name="Wang Y.-X."/>
            <person name="Fu G."/>
            <person name="Yang J."/>
            <person name="Qin Z.-Q."/>
            <person name="Miao Y.-G."/>
            <person name="Wang W.-Y."/>
            <person name="Chen R.-S."/>
            <person name="Shen Y."/>
            <person name="Chen Z."/>
            <person name="Yuan Z.-H."/>
            <person name="Zhao G.-P."/>
            <person name="Qu D."/>
            <person name="Danchin A."/>
            <person name="Wen Y.-M."/>
        </authorList>
    </citation>
    <scope>NUCLEOTIDE SEQUENCE [LARGE SCALE GENOMIC DNA]</scope>
    <source>
        <strain>ATCC 12228 / FDA PCI 1200</strain>
    </source>
</reference>
<proteinExistence type="inferred from homology"/>
<accession>Q8CST4</accession>
<evidence type="ECO:0000250" key="1"/>
<evidence type="ECO:0000255" key="2">
    <source>
        <dbReference type="HAMAP-Rule" id="MF_00100"/>
    </source>
</evidence>
<evidence type="ECO:0000256" key="3">
    <source>
        <dbReference type="SAM" id="MobiDB-lite"/>
    </source>
</evidence>
<feature type="chain" id="PRO_0000137254" description="Translation initiation factor IF-2">
    <location>
        <begin position="1"/>
        <end position="720"/>
    </location>
</feature>
<feature type="domain" description="tr-type G">
    <location>
        <begin position="222"/>
        <end position="391"/>
    </location>
</feature>
<feature type="region of interest" description="Disordered" evidence="3">
    <location>
        <begin position="48"/>
        <end position="138"/>
    </location>
</feature>
<feature type="region of interest" description="G1" evidence="1">
    <location>
        <begin position="231"/>
        <end position="238"/>
    </location>
</feature>
<feature type="region of interest" description="G2" evidence="1">
    <location>
        <begin position="256"/>
        <end position="260"/>
    </location>
</feature>
<feature type="region of interest" description="G3" evidence="1">
    <location>
        <begin position="277"/>
        <end position="280"/>
    </location>
</feature>
<feature type="region of interest" description="G4" evidence="1">
    <location>
        <begin position="331"/>
        <end position="334"/>
    </location>
</feature>
<feature type="region of interest" description="G5" evidence="1">
    <location>
        <begin position="367"/>
        <end position="369"/>
    </location>
</feature>
<feature type="compositionally biased region" description="Low complexity" evidence="3">
    <location>
        <begin position="60"/>
        <end position="75"/>
    </location>
</feature>
<feature type="compositionally biased region" description="Low complexity" evidence="3">
    <location>
        <begin position="99"/>
        <end position="113"/>
    </location>
</feature>
<feature type="compositionally biased region" description="Basic residues" evidence="3">
    <location>
        <begin position="114"/>
        <end position="123"/>
    </location>
</feature>
<feature type="binding site" evidence="2">
    <location>
        <begin position="231"/>
        <end position="238"/>
    </location>
    <ligand>
        <name>GTP</name>
        <dbReference type="ChEBI" id="CHEBI:37565"/>
    </ligand>
</feature>
<feature type="binding site" evidence="2">
    <location>
        <begin position="277"/>
        <end position="281"/>
    </location>
    <ligand>
        <name>GTP</name>
        <dbReference type="ChEBI" id="CHEBI:37565"/>
    </ligand>
</feature>
<feature type="binding site" evidence="2">
    <location>
        <begin position="331"/>
        <end position="334"/>
    </location>
    <ligand>
        <name>GTP</name>
        <dbReference type="ChEBI" id="CHEBI:37565"/>
    </ligand>
</feature>
<dbReference type="EMBL" id="AE015929">
    <property type="protein sequence ID" value="AAO04542.1"/>
    <property type="molecule type" value="Genomic_DNA"/>
</dbReference>
<dbReference type="RefSeq" id="NP_764500.1">
    <property type="nucleotide sequence ID" value="NC_004461.1"/>
</dbReference>
<dbReference type="RefSeq" id="WP_002456223.1">
    <property type="nucleotide sequence ID" value="NZ_WBME01000001.1"/>
</dbReference>
<dbReference type="SMR" id="Q8CST4"/>
<dbReference type="KEGG" id="sep:SE_0945"/>
<dbReference type="PATRIC" id="fig|176280.10.peg.920"/>
<dbReference type="eggNOG" id="COG0532">
    <property type="taxonomic scope" value="Bacteria"/>
</dbReference>
<dbReference type="HOGENOM" id="CLU_006301_5_1_9"/>
<dbReference type="OrthoDB" id="9811804at2"/>
<dbReference type="Proteomes" id="UP000001411">
    <property type="component" value="Chromosome"/>
</dbReference>
<dbReference type="GO" id="GO:0005829">
    <property type="term" value="C:cytosol"/>
    <property type="evidence" value="ECO:0007669"/>
    <property type="project" value="TreeGrafter"/>
</dbReference>
<dbReference type="GO" id="GO:0005525">
    <property type="term" value="F:GTP binding"/>
    <property type="evidence" value="ECO:0007669"/>
    <property type="project" value="UniProtKB-KW"/>
</dbReference>
<dbReference type="GO" id="GO:0003924">
    <property type="term" value="F:GTPase activity"/>
    <property type="evidence" value="ECO:0007669"/>
    <property type="project" value="UniProtKB-UniRule"/>
</dbReference>
<dbReference type="GO" id="GO:0003743">
    <property type="term" value="F:translation initiation factor activity"/>
    <property type="evidence" value="ECO:0007669"/>
    <property type="project" value="UniProtKB-UniRule"/>
</dbReference>
<dbReference type="CDD" id="cd01887">
    <property type="entry name" value="IF2_eIF5B"/>
    <property type="match status" value="1"/>
</dbReference>
<dbReference type="CDD" id="cd03702">
    <property type="entry name" value="IF2_mtIF2_II"/>
    <property type="match status" value="1"/>
</dbReference>
<dbReference type="CDD" id="cd03692">
    <property type="entry name" value="mtIF2_IVc"/>
    <property type="match status" value="1"/>
</dbReference>
<dbReference type="FunFam" id="2.40.30.10:FF:000007">
    <property type="entry name" value="Translation initiation factor IF-2"/>
    <property type="match status" value="1"/>
</dbReference>
<dbReference type="FunFam" id="2.40.30.10:FF:000008">
    <property type="entry name" value="Translation initiation factor IF-2"/>
    <property type="match status" value="1"/>
</dbReference>
<dbReference type="FunFam" id="3.40.50.10050:FF:000001">
    <property type="entry name" value="Translation initiation factor IF-2"/>
    <property type="match status" value="1"/>
</dbReference>
<dbReference type="FunFam" id="3.40.50.300:FF:000019">
    <property type="entry name" value="Translation initiation factor IF-2"/>
    <property type="match status" value="1"/>
</dbReference>
<dbReference type="Gene3D" id="1.10.10.2480">
    <property type="match status" value="1"/>
</dbReference>
<dbReference type="Gene3D" id="3.40.50.300">
    <property type="entry name" value="P-loop containing nucleotide triphosphate hydrolases"/>
    <property type="match status" value="1"/>
</dbReference>
<dbReference type="Gene3D" id="2.40.30.10">
    <property type="entry name" value="Translation factors"/>
    <property type="match status" value="2"/>
</dbReference>
<dbReference type="Gene3D" id="3.40.50.10050">
    <property type="entry name" value="Translation initiation factor IF- 2, domain 3"/>
    <property type="match status" value="1"/>
</dbReference>
<dbReference type="HAMAP" id="MF_00100_B">
    <property type="entry name" value="IF_2_B"/>
    <property type="match status" value="1"/>
</dbReference>
<dbReference type="InterPro" id="IPR053905">
    <property type="entry name" value="EF-G-like_DII"/>
</dbReference>
<dbReference type="InterPro" id="IPR044145">
    <property type="entry name" value="IF2_II"/>
</dbReference>
<dbReference type="InterPro" id="IPR006847">
    <property type="entry name" value="IF2_N"/>
</dbReference>
<dbReference type="InterPro" id="IPR027417">
    <property type="entry name" value="P-loop_NTPase"/>
</dbReference>
<dbReference type="InterPro" id="IPR005225">
    <property type="entry name" value="Small_GTP-bd"/>
</dbReference>
<dbReference type="InterPro" id="IPR000795">
    <property type="entry name" value="T_Tr_GTP-bd_dom"/>
</dbReference>
<dbReference type="InterPro" id="IPR000178">
    <property type="entry name" value="TF_IF2_bacterial-like"/>
</dbReference>
<dbReference type="InterPro" id="IPR015760">
    <property type="entry name" value="TIF_IF2"/>
</dbReference>
<dbReference type="InterPro" id="IPR023115">
    <property type="entry name" value="TIF_IF2_dom3"/>
</dbReference>
<dbReference type="InterPro" id="IPR036925">
    <property type="entry name" value="TIF_IF2_dom3_sf"/>
</dbReference>
<dbReference type="InterPro" id="IPR009000">
    <property type="entry name" value="Transl_B-barrel_sf"/>
</dbReference>
<dbReference type="NCBIfam" id="TIGR00487">
    <property type="entry name" value="IF-2"/>
    <property type="match status" value="1"/>
</dbReference>
<dbReference type="NCBIfam" id="TIGR00231">
    <property type="entry name" value="small_GTP"/>
    <property type="match status" value="1"/>
</dbReference>
<dbReference type="PANTHER" id="PTHR43381:SF5">
    <property type="entry name" value="TR-TYPE G DOMAIN-CONTAINING PROTEIN"/>
    <property type="match status" value="1"/>
</dbReference>
<dbReference type="PANTHER" id="PTHR43381">
    <property type="entry name" value="TRANSLATION INITIATION FACTOR IF-2-RELATED"/>
    <property type="match status" value="1"/>
</dbReference>
<dbReference type="Pfam" id="PF22042">
    <property type="entry name" value="EF-G_D2"/>
    <property type="match status" value="1"/>
</dbReference>
<dbReference type="Pfam" id="PF00009">
    <property type="entry name" value="GTP_EFTU"/>
    <property type="match status" value="1"/>
</dbReference>
<dbReference type="Pfam" id="PF11987">
    <property type="entry name" value="IF-2"/>
    <property type="match status" value="1"/>
</dbReference>
<dbReference type="Pfam" id="PF04760">
    <property type="entry name" value="IF2_N"/>
    <property type="match status" value="2"/>
</dbReference>
<dbReference type="SUPFAM" id="SSF52156">
    <property type="entry name" value="Initiation factor IF2/eIF5b, domain 3"/>
    <property type="match status" value="1"/>
</dbReference>
<dbReference type="SUPFAM" id="SSF52540">
    <property type="entry name" value="P-loop containing nucleoside triphosphate hydrolases"/>
    <property type="match status" value="1"/>
</dbReference>
<dbReference type="SUPFAM" id="SSF50447">
    <property type="entry name" value="Translation proteins"/>
    <property type="match status" value="2"/>
</dbReference>
<dbReference type="PROSITE" id="PS51722">
    <property type="entry name" value="G_TR_2"/>
    <property type="match status" value="1"/>
</dbReference>
<dbReference type="PROSITE" id="PS01176">
    <property type="entry name" value="IF2"/>
    <property type="match status" value="1"/>
</dbReference>